<gene>
    <name evidence="1" type="primary">dapD</name>
    <name type="ordered locus">BQ00650</name>
</gene>
<name>DAPD_BARQU</name>
<protein>
    <recommendedName>
        <fullName evidence="1">2,3,4,5-tetrahydropyridine-2,6-dicarboxylate N-succinyltransferase</fullName>
        <ecNumber evidence="1">2.3.1.117</ecNumber>
    </recommendedName>
    <alternativeName>
        <fullName evidence="1">Tetrahydrodipicolinate N-succinyltransferase</fullName>
        <shortName evidence="1">THDP succinyltransferase</shortName>
        <shortName evidence="1">THP succinyltransferase</shortName>
        <shortName evidence="1">Tetrahydropicolinate succinylase</shortName>
    </alternativeName>
</protein>
<comment type="catalytic activity">
    <reaction evidence="1">
        <text>(S)-2,3,4,5-tetrahydrodipicolinate + succinyl-CoA + H2O = (S)-2-succinylamino-6-oxoheptanedioate + CoA</text>
        <dbReference type="Rhea" id="RHEA:17325"/>
        <dbReference type="ChEBI" id="CHEBI:15377"/>
        <dbReference type="ChEBI" id="CHEBI:15685"/>
        <dbReference type="ChEBI" id="CHEBI:16845"/>
        <dbReference type="ChEBI" id="CHEBI:57287"/>
        <dbReference type="ChEBI" id="CHEBI:57292"/>
        <dbReference type="EC" id="2.3.1.117"/>
    </reaction>
</comment>
<comment type="pathway">
    <text evidence="1">Amino-acid biosynthesis; L-lysine biosynthesis via DAP pathway; LL-2,6-diaminopimelate from (S)-tetrahydrodipicolinate (succinylase route): step 1/3.</text>
</comment>
<comment type="subunit">
    <text evidence="1">Homotrimer.</text>
</comment>
<comment type="subcellular location">
    <subcellularLocation>
        <location evidence="1">Cytoplasm</location>
    </subcellularLocation>
</comment>
<comment type="similarity">
    <text evidence="1">Belongs to the transferase hexapeptide repeat family.</text>
</comment>
<sequence length="282" mass="31051">MTNLTQLEMIIEKAFDDRDSIKTTTKGEIRESVEHALNLLDKGEIRVAERQKNGQWHVHQWLKKAVLLFFRLNPMQIIAGGVNGTYWWDKVPSKFSNWQETDFKKANFRSVPGTIVRHSAYIAPNVILMPSFVNLGAFIDEGTMVDTWATVGSCAQIGKHVHLSGGVGLGGVLEPLQANPTIIEDHCFIGARSEVVEGCIIREGAVLGMGVFIGKSTKIIDRTTGEVFIGEVPAYSVVVPGSLPGKPLPNGEVGPNLYCAVIVKRVDQKTREKTSINDLLRD</sequence>
<evidence type="ECO:0000255" key="1">
    <source>
        <dbReference type="HAMAP-Rule" id="MF_00811"/>
    </source>
</evidence>
<keyword id="KW-0012">Acyltransferase</keyword>
<keyword id="KW-0028">Amino-acid biosynthesis</keyword>
<keyword id="KW-0963">Cytoplasm</keyword>
<keyword id="KW-0220">Diaminopimelate biosynthesis</keyword>
<keyword id="KW-0457">Lysine biosynthesis</keyword>
<keyword id="KW-0677">Repeat</keyword>
<keyword id="KW-0808">Transferase</keyword>
<reference key="1">
    <citation type="journal article" date="2004" name="Proc. Natl. Acad. Sci. U.S.A.">
        <title>The louse-borne human pathogen Bartonella quintana is a genomic derivative of the zoonotic agent Bartonella henselae.</title>
        <authorList>
            <person name="Alsmark U.C.M."/>
            <person name="Frank A.C."/>
            <person name="Karlberg E.O."/>
            <person name="Legault B.-A."/>
            <person name="Ardell D.H."/>
            <person name="Canbaeck B."/>
            <person name="Eriksson A.-S."/>
            <person name="Naeslund A.K."/>
            <person name="Handley S.A."/>
            <person name="Huvet M."/>
            <person name="La Scola B."/>
            <person name="Holmberg M."/>
            <person name="Andersson S.G.E."/>
        </authorList>
    </citation>
    <scope>NUCLEOTIDE SEQUENCE [LARGE SCALE GENOMIC DNA]</scope>
    <source>
        <strain>Toulouse</strain>
    </source>
</reference>
<accession>Q6G1F4</accession>
<organism>
    <name type="scientific">Bartonella quintana (strain Toulouse)</name>
    <name type="common">Rochalimaea quintana</name>
    <dbReference type="NCBI Taxonomy" id="283165"/>
    <lineage>
        <taxon>Bacteria</taxon>
        <taxon>Pseudomonadati</taxon>
        <taxon>Pseudomonadota</taxon>
        <taxon>Alphaproteobacteria</taxon>
        <taxon>Hyphomicrobiales</taxon>
        <taxon>Bartonellaceae</taxon>
        <taxon>Bartonella</taxon>
    </lineage>
</organism>
<dbReference type="EC" id="2.3.1.117" evidence="1"/>
<dbReference type="EMBL" id="BX897700">
    <property type="protein sequence ID" value="CAF25572.1"/>
    <property type="molecule type" value="Genomic_DNA"/>
</dbReference>
<dbReference type="RefSeq" id="WP_011178899.1">
    <property type="nucleotide sequence ID" value="NC_005955.1"/>
</dbReference>
<dbReference type="SMR" id="Q6G1F4"/>
<dbReference type="KEGG" id="bqu:BQ00650"/>
<dbReference type="eggNOG" id="COG2171">
    <property type="taxonomic scope" value="Bacteria"/>
</dbReference>
<dbReference type="HOGENOM" id="CLU_050859_0_1_5"/>
<dbReference type="OrthoDB" id="9775362at2"/>
<dbReference type="UniPathway" id="UPA00034">
    <property type="reaction ID" value="UER00019"/>
</dbReference>
<dbReference type="Proteomes" id="UP000000597">
    <property type="component" value="Chromosome"/>
</dbReference>
<dbReference type="GO" id="GO:0005737">
    <property type="term" value="C:cytoplasm"/>
    <property type="evidence" value="ECO:0007669"/>
    <property type="project" value="UniProtKB-SubCell"/>
</dbReference>
<dbReference type="GO" id="GO:0008666">
    <property type="term" value="F:2,3,4,5-tetrahydropyridine-2,6-dicarboxylate N-succinyltransferase activity"/>
    <property type="evidence" value="ECO:0007669"/>
    <property type="project" value="UniProtKB-UniRule"/>
</dbReference>
<dbReference type="GO" id="GO:0019877">
    <property type="term" value="P:diaminopimelate biosynthetic process"/>
    <property type="evidence" value="ECO:0007669"/>
    <property type="project" value="UniProtKB-UniRule"/>
</dbReference>
<dbReference type="GO" id="GO:0009089">
    <property type="term" value="P:lysine biosynthetic process via diaminopimelate"/>
    <property type="evidence" value="ECO:0007669"/>
    <property type="project" value="UniProtKB-UniRule"/>
</dbReference>
<dbReference type="CDD" id="cd03350">
    <property type="entry name" value="LbH_THP_succinylT"/>
    <property type="match status" value="1"/>
</dbReference>
<dbReference type="Gene3D" id="2.160.10.10">
    <property type="entry name" value="Hexapeptide repeat proteins"/>
    <property type="match status" value="1"/>
</dbReference>
<dbReference type="Gene3D" id="1.10.166.10">
    <property type="entry name" value="Tetrahydrodipicolinate-N-succinyltransferase, N-terminal domain"/>
    <property type="match status" value="1"/>
</dbReference>
<dbReference type="HAMAP" id="MF_00811">
    <property type="entry name" value="DapD"/>
    <property type="match status" value="1"/>
</dbReference>
<dbReference type="InterPro" id="IPR005664">
    <property type="entry name" value="DapD_Trfase_Hexpep_rpt_fam"/>
</dbReference>
<dbReference type="InterPro" id="IPR001451">
    <property type="entry name" value="Hexapep"/>
</dbReference>
<dbReference type="InterPro" id="IPR018357">
    <property type="entry name" value="Hexapep_transf_CS"/>
</dbReference>
<dbReference type="InterPro" id="IPR023180">
    <property type="entry name" value="THP_succinylTrfase_dom1"/>
</dbReference>
<dbReference type="InterPro" id="IPR037133">
    <property type="entry name" value="THP_succinylTrfase_N_sf"/>
</dbReference>
<dbReference type="InterPro" id="IPR050179">
    <property type="entry name" value="Trans_hexapeptide_repeat"/>
</dbReference>
<dbReference type="InterPro" id="IPR011004">
    <property type="entry name" value="Trimer_LpxA-like_sf"/>
</dbReference>
<dbReference type="NCBIfam" id="TIGR00965">
    <property type="entry name" value="dapD"/>
    <property type="match status" value="1"/>
</dbReference>
<dbReference type="NCBIfam" id="NF008808">
    <property type="entry name" value="PRK11830.1"/>
    <property type="match status" value="1"/>
</dbReference>
<dbReference type="PANTHER" id="PTHR43300:SF10">
    <property type="entry name" value="2,3,4,5-TETRAHYDROPYRIDINE-2,6-DICARBOXYLATE N-ACETYLTRANSFERASE"/>
    <property type="match status" value="1"/>
</dbReference>
<dbReference type="PANTHER" id="PTHR43300">
    <property type="entry name" value="ACETYLTRANSFERASE"/>
    <property type="match status" value="1"/>
</dbReference>
<dbReference type="Pfam" id="PF14602">
    <property type="entry name" value="Hexapep_2"/>
    <property type="match status" value="1"/>
</dbReference>
<dbReference type="Pfam" id="PF14805">
    <property type="entry name" value="THDPS_N_2"/>
    <property type="match status" value="1"/>
</dbReference>
<dbReference type="SUPFAM" id="SSF51161">
    <property type="entry name" value="Trimeric LpxA-like enzymes"/>
    <property type="match status" value="1"/>
</dbReference>
<dbReference type="PROSITE" id="PS00101">
    <property type="entry name" value="HEXAPEP_TRANSFERASES"/>
    <property type="match status" value="1"/>
</dbReference>
<proteinExistence type="inferred from homology"/>
<feature type="chain" id="PRO_0000196914" description="2,3,4,5-tetrahydropyridine-2,6-dicarboxylate N-succinyltransferase">
    <location>
        <begin position="1"/>
        <end position="282"/>
    </location>
</feature>
<feature type="binding site" evidence="1">
    <location>
        <position position="109"/>
    </location>
    <ligand>
        <name>substrate</name>
    </ligand>
</feature>
<feature type="binding site" evidence="1">
    <location>
        <position position="146"/>
    </location>
    <ligand>
        <name>substrate</name>
    </ligand>
</feature>